<accession>P18686</accession>
<organism>
    <name type="scientific">Ovis aries</name>
    <name type="common">Sheep</name>
    <dbReference type="NCBI Taxonomy" id="9940"/>
    <lineage>
        <taxon>Eukaryota</taxon>
        <taxon>Metazoa</taxon>
        <taxon>Chordata</taxon>
        <taxon>Craniata</taxon>
        <taxon>Vertebrata</taxon>
        <taxon>Euteleostomi</taxon>
        <taxon>Mammalia</taxon>
        <taxon>Eutheria</taxon>
        <taxon>Laurasiatheria</taxon>
        <taxon>Artiodactyla</taxon>
        <taxon>Ruminantia</taxon>
        <taxon>Pecora</taxon>
        <taxon>Bovidae</taxon>
        <taxon>Caprinae</taxon>
        <taxon>Ovis</taxon>
    </lineage>
</organism>
<evidence type="ECO:0000250" key="1"/>
<evidence type="ECO:0000250" key="2">
    <source>
        <dbReference type="UniProtKB" id="P02792"/>
    </source>
</evidence>
<evidence type="ECO:0000250" key="3">
    <source>
        <dbReference type="UniProtKB" id="P29391"/>
    </source>
</evidence>
<evidence type="ECO:0000255" key="4">
    <source>
        <dbReference type="PROSITE-ProRule" id="PRU00085"/>
    </source>
</evidence>
<evidence type="ECO:0000305" key="5"/>
<gene>
    <name type="primary">FTL</name>
</gene>
<comment type="function">
    <text evidence="1 2">Stores iron in a soluble, non-toxic, readily available form. Important for iron homeostasis. Iron is taken up in the ferrous form and deposited as ferric hydroxides after oxidation. Also plays a role in delivery of iron to cells. Mediates iron uptake in capsule cells of the developing kidney (By similarity). Delivery to lysosomes by the cargo receptor NCOA4 for autophagic degradation and release or iron (By similarity).</text>
</comment>
<comment type="subunit">
    <text evidence="2">Oligomer of 24 subunits. There are two types of subunits: L (light) chain and H (heavy) chain. The major chain can be light or heavy, depending on the species and tissue type. The functional molecule forms a roughly spherical shell with a diameter of 12 nm and contains a central cavity into which the insoluble mineral iron core is deposited. Interacts with NCOA4 (By similarity).</text>
</comment>
<comment type="subcellular location">
    <subcellularLocation>
        <location evidence="2">Cytoplasmic vesicle</location>
        <location evidence="2">Autophagosome</location>
    </subcellularLocation>
    <subcellularLocation>
        <location evidence="3">Cytoplasm</location>
    </subcellularLocation>
    <subcellularLocation>
        <location evidence="3">Autolysosome</location>
    </subcellularLocation>
</comment>
<comment type="similarity">
    <text evidence="5">Belongs to the ferritin family.</text>
</comment>
<sequence>MEAALLVEKNLNQALLDLHGLASARGDPHICDFLENHFLDEEV</sequence>
<proteinExistence type="evidence at protein level"/>
<keyword id="KW-0963">Cytoplasm</keyword>
<keyword id="KW-0968">Cytoplasmic vesicle</keyword>
<keyword id="KW-0903">Direct protein sequencing</keyword>
<keyword id="KW-0408">Iron</keyword>
<keyword id="KW-0409">Iron storage</keyword>
<keyword id="KW-0458">Lysosome</keyword>
<keyword id="KW-0479">Metal-binding</keyword>
<keyword id="KW-1185">Reference proteome</keyword>
<feature type="chain" id="PRO_0000201067" description="Ferritin light chain">
    <location>
        <begin position="1" status="less than"/>
        <end position="43" status="greater than"/>
    </location>
</feature>
<feature type="domain" description="Ferritin-like diiron" evidence="4">
    <location>
        <begin position="1" status="less than"/>
        <end position="43" status="greater than"/>
    </location>
</feature>
<feature type="non-terminal residue">
    <location>
        <position position="1"/>
    </location>
</feature>
<feature type="non-terminal residue">
    <location>
        <position position="43"/>
    </location>
</feature>
<dbReference type="PIR" id="S04979">
    <property type="entry name" value="S04979"/>
</dbReference>
<dbReference type="SMR" id="P18686"/>
<dbReference type="STRING" id="9940.ENSOARP00000006143"/>
<dbReference type="PaxDb" id="9940-ENSOARP00000006143"/>
<dbReference type="eggNOG" id="KOG2332">
    <property type="taxonomic scope" value="Eukaryota"/>
</dbReference>
<dbReference type="Proteomes" id="UP000002356">
    <property type="component" value="Unplaced"/>
</dbReference>
<dbReference type="GO" id="GO:0044754">
    <property type="term" value="C:autolysosome"/>
    <property type="evidence" value="ECO:0007669"/>
    <property type="project" value="UniProtKB-SubCell"/>
</dbReference>
<dbReference type="GO" id="GO:0005776">
    <property type="term" value="C:autophagosome"/>
    <property type="evidence" value="ECO:0007669"/>
    <property type="project" value="UniProtKB-SubCell"/>
</dbReference>
<dbReference type="GO" id="GO:0031410">
    <property type="term" value="C:cytoplasmic vesicle"/>
    <property type="evidence" value="ECO:0007669"/>
    <property type="project" value="UniProtKB-KW"/>
</dbReference>
<dbReference type="GO" id="GO:0070288">
    <property type="term" value="C:ferritin complex"/>
    <property type="evidence" value="ECO:0000250"/>
    <property type="project" value="UniProtKB"/>
</dbReference>
<dbReference type="GO" id="GO:0008199">
    <property type="term" value="F:ferric iron binding"/>
    <property type="evidence" value="ECO:0007669"/>
    <property type="project" value="InterPro"/>
</dbReference>
<dbReference type="GO" id="GO:0008198">
    <property type="term" value="F:ferrous iron binding"/>
    <property type="evidence" value="ECO:0007669"/>
    <property type="project" value="TreeGrafter"/>
</dbReference>
<dbReference type="GO" id="GO:0005506">
    <property type="term" value="F:iron ion binding"/>
    <property type="evidence" value="ECO:0000250"/>
    <property type="project" value="UniProtKB"/>
</dbReference>
<dbReference type="GO" id="GO:0006879">
    <property type="term" value="P:intracellular iron ion homeostasis"/>
    <property type="evidence" value="ECO:0007669"/>
    <property type="project" value="UniProtKB-KW"/>
</dbReference>
<dbReference type="GO" id="GO:0006826">
    <property type="term" value="P:iron ion transport"/>
    <property type="evidence" value="ECO:0007669"/>
    <property type="project" value="InterPro"/>
</dbReference>
<dbReference type="Gene3D" id="1.20.1260.10">
    <property type="match status" value="1"/>
</dbReference>
<dbReference type="InterPro" id="IPR001519">
    <property type="entry name" value="Ferritin"/>
</dbReference>
<dbReference type="InterPro" id="IPR012347">
    <property type="entry name" value="Ferritin-like"/>
</dbReference>
<dbReference type="InterPro" id="IPR009040">
    <property type="entry name" value="Ferritin-like_diiron"/>
</dbReference>
<dbReference type="InterPro" id="IPR009078">
    <property type="entry name" value="Ferritin-like_SF"/>
</dbReference>
<dbReference type="InterPro" id="IPR008331">
    <property type="entry name" value="Ferritin_DPS_dom"/>
</dbReference>
<dbReference type="PANTHER" id="PTHR11431">
    <property type="entry name" value="FERRITIN"/>
    <property type="match status" value="1"/>
</dbReference>
<dbReference type="PANTHER" id="PTHR11431:SF47">
    <property type="entry name" value="FERRITIN LIGHT CHAIN"/>
    <property type="match status" value="1"/>
</dbReference>
<dbReference type="Pfam" id="PF00210">
    <property type="entry name" value="Ferritin"/>
    <property type="match status" value="1"/>
</dbReference>
<dbReference type="SUPFAM" id="SSF47240">
    <property type="entry name" value="Ferritin-like"/>
    <property type="match status" value="1"/>
</dbReference>
<dbReference type="PROSITE" id="PS50905">
    <property type="entry name" value="FERRITIN_LIKE"/>
    <property type="match status" value="1"/>
</dbReference>
<reference key="1">
    <citation type="journal article" date="1989" name="Arch. Biochem. Biophys.">
        <title>Crosslinks between intramolecular pairs of ferritin subunits: effects on both H and L subunits and on immunoreactivity of sheep spleen ferritin.</title>
        <authorList>
            <person name="McKenzie R.A."/>
            <person name="Yablonski M.J."/>
            <person name="Gillespie G.Y."/>
            <person name="Theil E.C."/>
        </authorList>
    </citation>
    <scope>PROTEIN SEQUENCE</scope>
</reference>
<protein>
    <recommendedName>
        <fullName>Ferritin light chain</fullName>
        <shortName>Ferritin L subunit</shortName>
    </recommendedName>
</protein>
<name>FRIL_SHEEP</name>